<keyword id="KW-1015">Disulfide bond</keyword>
<keyword id="KW-0646">Protease inhibitor</keyword>
<keyword id="KW-0964">Secreted</keyword>
<keyword id="KW-0722">Serine protease inhibitor</keyword>
<keyword id="KW-0732">Signal</keyword>
<evidence type="ECO:0000250" key="1"/>
<evidence type="ECO:0000250" key="2">
    <source>
        <dbReference type="UniProtKB" id="P68425"/>
    </source>
</evidence>
<evidence type="ECO:0000255" key="3"/>
<evidence type="ECO:0000255" key="4">
    <source>
        <dbReference type="PROSITE-ProRule" id="PRU00031"/>
    </source>
</evidence>
<evidence type="ECO:0000303" key="5">
    <source>
    </source>
</evidence>
<evidence type="ECO:0000305" key="6"/>
<evidence type="ECO:0000305" key="7">
    <source>
    </source>
</evidence>
<protein>
    <recommendedName>
        <fullName>Kunitz-type U15-theraphotoxin-Hhn1f</fullName>
        <shortName>U15-TRTX-Hhn1f</shortName>
    </recommendedName>
    <alternativeName>
        <fullName evidence="5">Kunitz-type serine protease inhibitor HNTX-0314974</fullName>
    </alternativeName>
</protein>
<reference key="1">
    <citation type="journal article" date="2008" name="PLoS ONE">
        <title>Discovery of a distinct superfamily of Kunitz-type toxin (KTT) from tarantulas.</title>
        <authorList>
            <person name="Yuan C.-H."/>
            <person name="He Q.-Y."/>
            <person name="Peng K."/>
            <person name="Diao J.-B."/>
            <person name="Jiang L.-P."/>
            <person name="Tang X."/>
            <person name="Liang S.-P."/>
        </authorList>
    </citation>
    <scope>NUCLEOTIDE SEQUENCE [MRNA]</scope>
    <source>
        <tissue>Venom gland</tissue>
    </source>
</reference>
<name>VKT74_CYRHA</name>
<accession>P0DJ73</accession>
<organism>
    <name type="scientific">Cyriopagopus hainanus</name>
    <name type="common">Chinese bird spider</name>
    <name type="synonym">Haplopelma hainanum</name>
    <dbReference type="NCBI Taxonomy" id="209901"/>
    <lineage>
        <taxon>Eukaryota</taxon>
        <taxon>Metazoa</taxon>
        <taxon>Ecdysozoa</taxon>
        <taxon>Arthropoda</taxon>
        <taxon>Chelicerata</taxon>
        <taxon>Arachnida</taxon>
        <taxon>Araneae</taxon>
        <taxon>Mygalomorphae</taxon>
        <taxon>Theraphosidae</taxon>
        <taxon>Haplopelma</taxon>
    </lineage>
</organism>
<comment type="function">
    <text evidence="2">Serine protease inhibitor that inhibits trypsin at a molar ratio of 1:1.</text>
</comment>
<comment type="subcellular location">
    <subcellularLocation>
        <location evidence="7">Secreted</location>
    </subcellularLocation>
</comment>
<comment type="tissue specificity">
    <text evidence="7">Expressed by the venom gland.</text>
</comment>
<comment type="similarity">
    <text evidence="6">Belongs to the venom Kunitz-type family. 03 (sub-Kunitz) subfamily.</text>
</comment>
<sequence>MGTARFLRAVLLLSVLLMVTFPALLSAEHHDGRVGICRLPSDSGDCLRFFEMWYFDGTTCTKFVYGGYGGNNNRFPTEKACMKRCAKA</sequence>
<feature type="signal peptide" evidence="3">
    <location>
        <begin position="1"/>
        <end position="27"/>
    </location>
</feature>
<feature type="propeptide" id="PRO_0000413821" evidence="1">
    <location>
        <begin position="28"/>
        <end position="33"/>
    </location>
</feature>
<feature type="chain" id="PRO_0000413822" description="Kunitz-type U15-theraphotoxin-Hhn1f">
    <location>
        <begin position="34"/>
        <end position="88"/>
    </location>
</feature>
<feature type="domain" description="BPTI/Kunitz inhibitor" evidence="4">
    <location>
        <begin position="37"/>
        <end position="85"/>
    </location>
</feature>
<feature type="site" description="May bind Kv1" evidence="1">
    <location>
        <position position="39"/>
    </location>
</feature>
<feature type="site" description="Reactive bond for chymotrypsin" evidence="1">
    <location>
        <begin position="47"/>
        <end position="48"/>
    </location>
</feature>
<feature type="disulfide bond" evidence="4">
    <location>
        <begin position="37"/>
        <end position="85"/>
    </location>
</feature>
<feature type="disulfide bond" evidence="4">
    <location>
        <begin position="60"/>
        <end position="81"/>
    </location>
</feature>
<dbReference type="SMR" id="P0DJ73"/>
<dbReference type="ArachnoServer" id="AS001769">
    <property type="toxin name" value="U15-theraphotoxin-Hhn1f"/>
</dbReference>
<dbReference type="GO" id="GO:0005615">
    <property type="term" value="C:extracellular space"/>
    <property type="evidence" value="ECO:0007669"/>
    <property type="project" value="TreeGrafter"/>
</dbReference>
<dbReference type="GO" id="GO:0015459">
    <property type="term" value="F:potassium channel regulator activity"/>
    <property type="evidence" value="ECO:0007669"/>
    <property type="project" value="UniProtKB-KW"/>
</dbReference>
<dbReference type="GO" id="GO:0004867">
    <property type="term" value="F:serine-type endopeptidase inhibitor activity"/>
    <property type="evidence" value="ECO:0007669"/>
    <property type="project" value="UniProtKB-KW"/>
</dbReference>
<dbReference type="GO" id="GO:0090729">
    <property type="term" value="F:toxin activity"/>
    <property type="evidence" value="ECO:0007669"/>
    <property type="project" value="UniProtKB-KW"/>
</dbReference>
<dbReference type="GO" id="GO:0044562">
    <property type="term" value="P:envenomation resulting in negative regulation of voltage-gated potassium channel activity in another organism"/>
    <property type="evidence" value="ECO:0007669"/>
    <property type="project" value="UniProtKB-ARBA"/>
</dbReference>
<dbReference type="CDD" id="cd22598">
    <property type="entry name" value="Kunitz_huwentoxin"/>
    <property type="match status" value="1"/>
</dbReference>
<dbReference type="FunFam" id="4.10.410.10:FF:000020">
    <property type="entry name" value="Collagen, type VI, alpha 3"/>
    <property type="match status" value="1"/>
</dbReference>
<dbReference type="Gene3D" id="4.10.410.10">
    <property type="entry name" value="Pancreatic trypsin inhibitor Kunitz domain"/>
    <property type="match status" value="1"/>
</dbReference>
<dbReference type="InterPro" id="IPR002223">
    <property type="entry name" value="Kunitz_BPTI"/>
</dbReference>
<dbReference type="InterPro" id="IPR036880">
    <property type="entry name" value="Kunitz_BPTI_sf"/>
</dbReference>
<dbReference type="InterPro" id="IPR050098">
    <property type="entry name" value="TFPI/VKTCI-like"/>
</dbReference>
<dbReference type="PANTHER" id="PTHR10083">
    <property type="entry name" value="KUNITZ-TYPE PROTEASE INHIBITOR-RELATED"/>
    <property type="match status" value="1"/>
</dbReference>
<dbReference type="PANTHER" id="PTHR10083:SF328">
    <property type="entry name" value="TISSUE FACTOR PATHWAY INHIBITOR"/>
    <property type="match status" value="1"/>
</dbReference>
<dbReference type="Pfam" id="PF00014">
    <property type="entry name" value="Kunitz_BPTI"/>
    <property type="match status" value="1"/>
</dbReference>
<dbReference type="PRINTS" id="PR00759">
    <property type="entry name" value="BASICPTASE"/>
</dbReference>
<dbReference type="SMART" id="SM00131">
    <property type="entry name" value="KU"/>
    <property type="match status" value="1"/>
</dbReference>
<dbReference type="SUPFAM" id="SSF57362">
    <property type="entry name" value="BPTI-like"/>
    <property type="match status" value="1"/>
</dbReference>
<dbReference type="PROSITE" id="PS50279">
    <property type="entry name" value="BPTI_KUNITZ_2"/>
    <property type="match status" value="1"/>
</dbReference>
<proteinExistence type="inferred from homology"/>